<gene>
    <name evidence="1" type="primary">psbH</name>
</gene>
<feature type="chain" id="PRO_0000275770" description="Photosystem II reaction center protein H">
    <location>
        <begin position="1"/>
        <end position="78"/>
    </location>
</feature>
<feature type="transmembrane region" description="Helical" evidence="1">
    <location>
        <begin position="39"/>
        <end position="59"/>
    </location>
</feature>
<feature type="modified residue" description="Phosphothreonine" evidence="2">
    <location>
        <position position="3"/>
    </location>
</feature>
<keyword id="KW-0150">Chloroplast</keyword>
<keyword id="KW-0472">Membrane</keyword>
<keyword id="KW-0597">Phosphoprotein</keyword>
<keyword id="KW-0602">Photosynthesis</keyword>
<keyword id="KW-0604">Photosystem II</keyword>
<keyword id="KW-0934">Plastid</keyword>
<keyword id="KW-0793">Thylakoid</keyword>
<keyword id="KW-0812">Transmembrane</keyword>
<keyword id="KW-1133">Transmembrane helix</keyword>
<reference key="1">
    <citation type="journal article" date="2005" name="Mol. Biol. Evol.">
        <title>The chloroplast genome sequence of the green alga Pseudendoclonium akinetum (Ulvophyceae) reveals unusual structural features and new insights into the branching order of chlorophyte lineages.</title>
        <authorList>
            <person name="Pombert J.-F."/>
            <person name="Otis C."/>
            <person name="Lemieux C."/>
            <person name="Turmel M."/>
        </authorList>
    </citation>
    <scope>NUCLEOTIDE SEQUENCE [LARGE SCALE GENOMIC DNA]</scope>
    <source>
        <strain>UTEX 1912</strain>
    </source>
</reference>
<proteinExistence type="inferred from homology"/>
<geneLocation type="chloroplast"/>
<sequence length="78" mass="8431">MATKTSKSTDDLGMTTALGTLLRPLNSEYGKVAPGWGTATLMGVFMALFAVFLVIILEIYNSSVILDDVQMSWQSLAK</sequence>
<dbReference type="EMBL" id="AY835431">
    <property type="protein sequence ID" value="AAV80663.1"/>
    <property type="molecule type" value="Genomic_DNA"/>
</dbReference>
<dbReference type="RefSeq" id="YP_636241.1">
    <property type="nucleotide sequence ID" value="NC_008114.1"/>
</dbReference>
<dbReference type="SMR" id="Q3ZJ26"/>
<dbReference type="GeneID" id="4108843"/>
<dbReference type="GO" id="GO:0009535">
    <property type="term" value="C:chloroplast thylakoid membrane"/>
    <property type="evidence" value="ECO:0007669"/>
    <property type="project" value="UniProtKB-SubCell"/>
</dbReference>
<dbReference type="GO" id="GO:0009523">
    <property type="term" value="C:photosystem II"/>
    <property type="evidence" value="ECO:0007669"/>
    <property type="project" value="UniProtKB-KW"/>
</dbReference>
<dbReference type="GO" id="GO:0042301">
    <property type="term" value="F:phosphate ion binding"/>
    <property type="evidence" value="ECO:0007669"/>
    <property type="project" value="InterPro"/>
</dbReference>
<dbReference type="GO" id="GO:0015979">
    <property type="term" value="P:photosynthesis"/>
    <property type="evidence" value="ECO:0007669"/>
    <property type="project" value="UniProtKB-UniRule"/>
</dbReference>
<dbReference type="GO" id="GO:0050821">
    <property type="term" value="P:protein stabilization"/>
    <property type="evidence" value="ECO:0007669"/>
    <property type="project" value="InterPro"/>
</dbReference>
<dbReference type="Gene3D" id="1.20.5.880">
    <property type="entry name" value="Photosystem II reaction center protein H"/>
    <property type="match status" value="1"/>
</dbReference>
<dbReference type="HAMAP" id="MF_00752">
    <property type="entry name" value="PSII_PsbH"/>
    <property type="match status" value="1"/>
</dbReference>
<dbReference type="InterPro" id="IPR001056">
    <property type="entry name" value="PSII_PsbH"/>
</dbReference>
<dbReference type="InterPro" id="IPR036863">
    <property type="entry name" value="PSII_PsbH_sf"/>
</dbReference>
<dbReference type="NCBIfam" id="NF002728">
    <property type="entry name" value="PRK02624.1"/>
    <property type="match status" value="1"/>
</dbReference>
<dbReference type="PANTHER" id="PTHR34469">
    <property type="entry name" value="PHOTOSYSTEM II REACTION CENTER PROTEIN H"/>
    <property type="match status" value="1"/>
</dbReference>
<dbReference type="PANTHER" id="PTHR34469:SF4">
    <property type="entry name" value="PHOTOSYSTEM II REACTION CENTER PROTEIN H"/>
    <property type="match status" value="1"/>
</dbReference>
<dbReference type="Pfam" id="PF00737">
    <property type="entry name" value="PsbH"/>
    <property type="match status" value="1"/>
</dbReference>
<dbReference type="SUPFAM" id="SSF161025">
    <property type="entry name" value="Photosystem II 10 kDa phosphoprotein PsbH"/>
    <property type="match status" value="1"/>
</dbReference>
<comment type="function">
    <text evidence="1">One of the components of the core complex of photosystem II (PSII), required for its stability and/or assembly. PSII is a light-driven water:plastoquinone oxidoreductase that uses light energy to abstract electrons from H(2)O, generating O(2) and a proton gradient subsequently used for ATP formation. It consists of a core antenna complex that captures photons, and an electron transfer chain that converts photonic excitation into a charge separation.</text>
</comment>
<comment type="subunit">
    <text evidence="1">PSII is composed of 1 copy each of membrane proteins PsbA, PsbB, PsbC, PsbD, PsbE, PsbF, PsbH, PsbI, PsbJ, PsbK, PsbL, PsbM, PsbT, PsbX, PsbY, PsbZ, Psb30/Ycf12, at least 3 peripheral proteins of the oxygen-evolving complex and a large number of cofactors. It forms dimeric complexes.</text>
</comment>
<comment type="subcellular location">
    <subcellularLocation>
        <location evidence="1">Plastid</location>
        <location evidence="1">Chloroplast thylakoid membrane</location>
        <topology evidence="1">Single-pass membrane protein</topology>
    </subcellularLocation>
</comment>
<comment type="PTM">
    <text evidence="2">Phosphorylation is a light-dependent reaction catalyzed by a membrane-bound kinase; phosphorylation occurs on Thr residue(s) in the N-terminus of the protein.</text>
</comment>
<comment type="similarity">
    <text evidence="1">Belongs to the PsbH family.</text>
</comment>
<organism>
    <name type="scientific">Tupiella akineta</name>
    <name type="common">Green alga</name>
    <name type="synonym">Pseudendoclonium akinetum</name>
    <dbReference type="NCBI Taxonomy" id="160070"/>
    <lineage>
        <taxon>Eukaryota</taxon>
        <taxon>Viridiplantae</taxon>
        <taxon>Chlorophyta</taxon>
        <taxon>Ulvophyceae</taxon>
        <taxon>OUU clade</taxon>
        <taxon>Ulotrichales</taxon>
        <taxon>Tupiellaceae</taxon>
        <taxon>Tupiella</taxon>
    </lineage>
</organism>
<name>PSBH_TUPAK</name>
<protein>
    <recommendedName>
        <fullName evidence="1">Photosystem II reaction center protein H</fullName>
        <shortName evidence="1">PSII-H</shortName>
    </recommendedName>
    <alternativeName>
        <fullName evidence="2">Photosystem II 10 kDa phosphoprotein</fullName>
    </alternativeName>
</protein>
<evidence type="ECO:0000255" key="1">
    <source>
        <dbReference type="HAMAP-Rule" id="MF_00752"/>
    </source>
</evidence>
<evidence type="ECO:0000305" key="2"/>
<accession>Q3ZJ26</accession>